<organism>
    <name type="scientific">Acidiphilium cryptum (strain JF-5)</name>
    <dbReference type="NCBI Taxonomy" id="349163"/>
    <lineage>
        <taxon>Bacteria</taxon>
        <taxon>Pseudomonadati</taxon>
        <taxon>Pseudomonadota</taxon>
        <taxon>Alphaproteobacteria</taxon>
        <taxon>Acetobacterales</taxon>
        <taxon>Acidocellaceae</taxon>
        <taxon>Acidiphilium</taxon>
    </lineage>
</organism>
<protein>
    <recommendedName>
        <fullName evidence="1">Acireductone dioxygenase</fullName>
    </recommendedName>
    <alternativeName>
        <fullName evidence="1">1,2-dihydroxy-3-keto-5-methylthiopentene dioxygenase</fullName>
        <shortName evidence="1">DHK-MTPene dioxygenase</shortName>
    </alternativeName>
    <alternativeName>
        <fullName evidence="1">Acireductone dioxygenase (Fe(2+)-requiring)</fullName>
        <shortName evidence="1">ARD'</shortName>
        <shortName evidence="1">Fe-ARD</shortName>
        <ecNumber evidence="1">1.13.11.54</ecNumber>
    </alternativeName>
    <alternativeName>
        <fullName evidence="1">Acireductone dioxygenase (Ni(2+)-requiring)</fullName>
        <shortName evidence="1">ARD</shortName>
        <shortName evidence="1">Ni-ARD</shortName>
        <ecNumber evidence="1">1.13.11.53</ecNumber>
    </alternativeName>
</protein>
<reference key="1">
    <citation type="submission" date="2007-05" db="EMBL/GenBank/DDBJ databases">
        <title>Complete sequence of chromosome of Acidiphilium cryptum JF-5.</title>
        <authorList>
            <consortium name="US DOE Joint Genome Institute"/>
            <person name="Copeland A."/>
            <person name="Lucas S."/>
            <person name="Lapidus A."/>
            <person name="Barry K."/>
            <person name="Detter J.C."/>
            <person name="Glavina del Rio T."/>
            <person name="Hammon N."/>
            <person name="Israni S."/>
            <person name="Dalin E."/>
            <person name="Tice H."/>
            <person name="Pitluck S."/>
            <person name="Sims D."/>
            <person name="Brettin T."/>
            <person name="Bruce D."/>
            <person name="Han C."/>
            <person name="Schmutz J."/>
            <person name="Larimer F."/>
            <person name="Land M."/>
            <person name="Hauser L."/>
            <person name="Kyrpides N."/>
            <person name="Kim E."/>
            <person name="Magnuson T."/>
            <person name="Richardson P."/>
        </authorList>
    </citation>
    <scope>NUCLEOTIDE SEQUENCE [LARGE SCALE GENOMIC DNA]</scope>
    <source>
        <strain>JF-5</strain>
    </source>
</reference>
<name>MTND_ACICJ</name>
<dbReference type="EC" id="1.13.11.54" evidence="1"/>
<dbReference type="EC" id="1.13.11.53" evidence="1"/>
<dbReference type="EMBL" id="CP000697">
    <property type="protein sequence ID" value="ABQ29247.1"/>
    <property type="molecule type" value="Genomic_DNA"/>
</dbReference>
<dbReference type="RefSeq" id="WP_011941212.1">
    <property type="nucleotide sequence ID" value="NC_009484.1"/>
</dbReference>
<dbReference type="SMR" id="A5FUG5"/>
<dbReference type="STRING" id="349163.Acry_0018"/>
<dbReference type="KEGG" id="acr:Acry_0018"/>
<dbReference type="eggNOG" id="COG1791">
    <property type="taxonomic scope" value="Bacteria"/>
</dbReference>
<dbReference type="HOGENOM" id="CLU_125400_0_0_5"/>
<dbReference type="UniPathway" id="UPA00904">
    <property type="reaction ID" value="UER00878"/>
</dbReference>
<dbReference type="Proteomes" id="UP000000245">
    <property type="component" value="Chromosome"/>
</dbReference>
<dbReference type="GO" id="GO:0010308">
    <property type="term" value="F:acireductone dioxygenase (Ni2+-requiring) activity"/>
    <property type="evidence" value="ECO:0007669"/>
    <property type="project" value="UniProtKB-UniRule"/>
</dbReference>
<dbReference type="GO" id="GO:0010309">
    <property type="term" value="F:acireductone dioxygenase [iron(II)-requiring] activity"/>
    <property type="evidence" value="ECO:0007669"/>
    <property type="project" value="UniProtKB-UniRule"/>
</dbReference>
<dbReference type="GO" id="GO:0005506">
    <property type="term" value="F:iron ion binding"/>
    <property type="evidence" value="ECO:0007669"/>
    <property type="project" value="UniProtKB-UniRule"/>
</dbReference>
<dbReference type="GO" id="GO:0016151">
    <property type="term" value="F:nickel cation binding"/>
    <property type="evidence" value="ECO:0007669"/>
    <property type="project" value="UniProtKB-UniRule"/>
</dbReference>
<dbReference type="GO" id="GO:0019509">
    <property type="term" value="P:L-methionine salvage from methylthioadenosine"/>
    <property type="evidence" value="ECO:0007669"/>
    <property type="project" value="UniProtKB-UniRule"/>
</dbReference>
<dbReference type="GO" id="GO:0019284">
    <property type="term" value="P:L-methionine salvage from S-adenosylmethionine"/>
    <property type="evidence" value="ECO:0007669"/>
    <property type="project" value="InterPro"/>
</dbReference>
<dbReference type="CDD" id="cd02232">
    <property type="entry name" value="cupin_ARD"/>
    <property type="match status" value="1"/>
</dbReference>
<dbReference type="Gene3D" id="2.60.120.10">
    <property type="entry name" value="Jelly Rolls"/>
    <property type="match status" value="1"/>
</dbReference>
<dbReference type="HAMAP" id="MF_01682">
    <property type="entry name" value="Salvage_MtnD"/>
    <property type="match status" value="1"/>
</dbReference>
<dbReference type="InterPro" id="IPR004313">
    <property type="entry name" value="ARD"/>
</dbReference>
<dbReference type="InterPro" id="IPR023956">
    <property type="entry name" value="ARD_bac"/>
</dbReference>
<dbReference type="InterPro" id="IPR014710">
    <property type="entry name" value="RmlC-like_jellyroll"/>
</dbReference>
<dbReference type="InterPro" id="IPR011051">
    <property type="entry name" value="RmlC_Cupin_sf"/>
</dbReference>
<dbReference type="PANTHER" id="PTHR23418">
    <property type="entry name" value="ACIREDUCTONE DIOXYGENASE"/>
    <property type="match status" value="1"/>
</dbReference>
<dbReference type="PANTHER" id="PTHR23418:SF0">
    <property type="entry name" value="ACIREDUCTONE DIOXYGENASE"/>
    <property type="match status" value="1"/>
</dbReference>
<dbReference type="Pfam" id="PF03079">
    <property type="entry name" value="ARD"/>
    <property type="match status" value="1"/>
</dbReference>
<dbReference type="SUPFAM" id="SSF51182">
    <property type="entry name" value="RmlC-like cupins"/>
    <property type="match status" value="1"/>
</dbReference>
<gene>
    <name evidence="1" type="primary">mtnD</name>
    <name type="ordered locus">Acry_0018</name>
</gene>
<comment type="function">
    <text evidence="1">Catalyzes 2 different reactions between oxygen and the acireductone 1,2-dihydroxy-3-keto-5-methylthiopentene (DHK-MTPene) depending upon the metal bound in the active site. Fe-containing acireductone dioxygenase (Fe-ARD) produces formate and 2-keto-4-methylthiobutyrate (KMTB), the alpha-ketoacid precursor of methionine in the methionine recycle pathway. Ni-containing acireductone dioxygenase (Ni-ARD) produces methylthiopropionate, carbon monoxide and formate, and does not lie on the methionine recycle pathway.</text>
</comment>
<comment type="catalytic activity">
    <reaction evidence="1">
        <text>1,2-dihydroxy-5-(methylsulfanyl)pent-1-en-3-one + O2 = 3-(methylsulfanyl)propanoate + CO + formate + 2 H(+)</text>
        <dbReference type="Rhea" id="RHEA:14161"/>
        <dbReference type="ChEBI" id="CHEBI:15378"/>
        <dbReference type="ChEBI" id="CHEBI:15379"/>
        <dbReference type="ChEBI" id="CHEBI:15740"/>
        <dbReference type="ChEBI" id="CHEBI:17245"/>
        <dbReference type="ChEBI" id="CHEBI:49016"/>
        <dbReference type="ChEBI" id="CHEBI:49252"/>
        <dbReference type="EC" id="1.13.11.53"/>
    </reaction>
</comment>
<comment type="catalytic activity">
    <reaction evidence="1">
        <text>1,2-dihydroxy-5-(methylsulfanyl)pent-1-en-3-one + O2 = 4-methylsulfanyl-2-oxobutanoate + formate + 2 H(+)</text>
        <dbReference type="Rhea" id="RHEA:24504"/>
        <dbReference type="ChEBI" id="CHEBI:15378"/>
        <dbReference type="ChEBI" id="CHEBI:15379"/>
        <dbReference type="ChEBI" id="CHEBI:15740"/>
        <dbReference type="ChEBI" id="CHEBI:16723"/>
        <dbReference type="ChEBI" id="CHEBI:49252"/>
        <dbReference type="EC" id="1.13.11.54"/>
    </reaction>
</comment>
<comment type="cofactor">
    <cofactor evidence="1">
        <name>Fe(2+)</name>
        <dbReference type="ChEBI" id="CHEBI:29033"/>
    </cofactor>
    <text evidence="1">Binds 1 Fe(2+) cation per monomer.</text>
</comment>
<comment type="cofactor">
    <cofactor evidence="1">
        <name>Ni(2+)</name>
        <dbReference type="ChEBI" id="CHEBI:49786"/>
    </cofactor>
    <text evidence="1">Binds 1 nickel ion per monomer.</text>
</comment>
<comment type="pathway">
    <text evidence="1">Amino-acid biosynthesis; L-methionine biosynthesis via salvage pathway; L-methionine from S-methyl-5-thio-alpha-D-ribose 1-phosphate: step 5/6.</text>
</comment>
<comment type="subunit">
    <text evidence="1">Monomer.</text>
</comment>
<comment type="similarity">
    <text evidence="1">Belongs to the acireductone dioxygenase (ARD) family.</text>
</comment>
<accession>A5FUG5</accession>
<sequence length="180" mass="19872">MSTLRIFDDANPDAPLVATSDAARMAAELKSIGVRFERWESPVAIAADASPEEILEAYRPYLDRLMGETGAGSADVIKMTPDHPQAGTLREKFLNEHIHTEDEVRFFVRGSGHFVMHLDGKVYDAYCTEGDLISVPANTRHWFDAGSTPDFIALRIFTDTSGWVAHFTGDQISARFPVAA</sequence>
<evidence type="ECO:0000255" key="1">
    <source>
        <dbReference type="HAMAP-Rule" id="MF_01682"/>
    </source>
</evidence>
<feature type="chain" id="PRO_0000359168" description="Acireductone dioxygenase">
    <location>
        <begin position="1"/>
        <end position="180"/>
    </location>
</feature>
<feature type="binding site" evidence="1">
    <location>
        <position position="97"/>
    </location>
    <ligand>
        <name>Fe(2+)</name>
        <dbReference type="ChEBI" id="CHEBI:29033"/>
    </ligand>
</feature>
<feature type="binding site" evidence="1">
    <location>
        <position position="97"/>
    </location>
    <ligand>
        <name>Ni(2+)</name>
        <dbReference type="ChEBI" id="CHEBI:49786"/>
    </ligand>
</feature>
<feature type="binding site" evidence="1">
    <location>
        <position position="99"/>
    </location>
    <ligand>
        <name>Fe(2+)</name>
        <dbReference type="ChEBI" id="CHEBI:29033"/>
    </ligand>
</feature>
<feature type="binding site" evidence="1">
    <location>
        <position position="99"/>
    </location>
    <ligand>
        <name>Ni(2+)</name>
        <dbReference type="ChEBI" id="CHEBI:49786"/>
    </ligand>
</feature>
<feature type="binding site" evidence="1">
    <location>
        <position position="103"/>
    </location>
    <ligand>
        <name>Fe(2+)</name>
        <dbReference type="ChEBI" id="CHEBI:29033"/>
    </ligand>
</feature>
<feature type="binding site" evidence="1">
    <location>
        <position position="103"/>
    </location>
    <ligand>
        <name>Ni(2+)</name>
        <dbReference type="ChEBI" id="CHEBI:49786"/>
    </ligand>
</feature>
<feature type="binding site" evidence="1">
    <location>
        <position position="141"/>
    </location>
    <ligand>
        <name>Fe(2+)</name>
        <dbReference type="ChEBI" id="CHEBI:29033"/>
    </ligand>
</feature>
<feature type="binding site" evidence="1">
    <location>
        <position position="141"/>
    </location>
    <ligand>
        <name>Ni(2+)</name>
        <dbReference type="ChEBI" id="CHEBI:49786"/>
    </ligand>
</feature>
<feature type="site" description="May play a role in metal incorporation in vivo" evidence="1">
    <location>
        <position position="96"/>
    </location>
</feature>
<feature type="site" description="May play a role in transmitting local conformational changes" evidence="1">
    <location>
        <position position="102"/>
    </location>
</feature>
<feature type="site" description="Important to generate the dianion" evidence="1">
    <location>
        <position position="105"/>
    </location>
</feature>
<proteinExistence type="inferred from homology"/>
<keyword id="KW-0028">Amino-acid biosynthesis</keyword>
<keyword id="KW-0223">Dioxygenase</keyword>
<keyword id="KW-0408">Iron</keyword>
<keyword id="KW-0479">Metal-binding</keyword>
<keyword id="KW-0486">Methionine biosynthesis</keyword>
<keyword id="KW-0533">Nickel</keyword>
<keyword id="KW-0560">Oxidoreductase</keyword>
<keyword id="KW-1185">Reference proteome</keyword>